<feature type="signal peptide" evidence="1">
    <location>
        <begin position="1"/>
        <end position="23"/>
    </location>
</feature>
<feature type="chain" id="PRO_0000016413" description="Interferon tau-1">
    <location>
        <begin position="24"/>
        <end position="195"/>
    </location>
</feature>
<feature type="disulfide bond" evidence="3">
    <location>
        <begin position="24"/>
        <end position="122"/>
    </location>
</feature>
<feature type="disulfide bond" evidence="3">
    <location>
        <begin position="52"/>
        <end position="162"/>
    </location>
</feature>
<feature type="helix" evidence="5">
    <location>
        <begin position="27"/>
        <end position="46"/>
    </location>
</feature>
<feature type="helix" evidence="5">
    <location>
        <begin position="64"/>
        <end position="68"/>
    </location>
</feature>
<feature type="helix" evidence="5">
    <location>
        <begin position="73"/>
        <end position="95"/>
    </location>
</feature>
<feature type="helix" evidence="5">
    <location>
        <begin position="103"/>
        <end position="122"/>
    </location>
</feature>
<feature type="helix" evidence="5">
    <location>
        <begin position="138"/>
        <end position="156"/>
    </location>
</feature>
<feature type="turn" evidence="5">
    <location>
        <begin position="157"/>
        <end position="159"/>
    </location>
</feature>
<feature type="helix" evidence="5">
    <location>
        <begin position="161"/>
        <end position="186"/>
    </location>
</feature>
<name>IFNT1_SHEEP</name>
<reference key="1">
    <citation type="journal article" date="1987" name="Nature">
        <title>Interferon-like sequence of ovine trophoblast protein secreted by embryonic trophectoderm.</title>
        <authorList>
            <person name="Imakawa K."/>
            <person name="Antony R.V."/>
            <person name="Kazemi M."/>
            <person name="Marotti K.R."/>
            <person name="Polites H.G."/>
            <person name="Roberts R.M."/>
        </authorList>
    </citation>
    <scope>NUCLEOTIDE SEQUENCE [MRNA]</scope>
    <source>
        <tissue>Trophoblast</tissue>
    </source>
</reference>
<reference key="2">
    <citation type="journal article" date="1996" name="Endocrinology">
        <title>Ovine interferon tau suppresses transcription of the estrogen receptor and oxytocin receptor genes in the ovine endometrium.</title>
        <authorList>
            <person name="Spencer T.E."/>
            <person name="Bazer F.W."/>
        </authorList>
    </citation>
    <scope>FUNCTION</scope>
</reference>
<reference key="3">
    <citation type="journal article" date="1994" name="Protein Eng.">
        <title>Predicted structural motif of IFN tau.</title>
        <authorList>
            <person name="Jarpe M.A."/>
            <person name="Johnson H.M."/>
            <person name="Bazer F.W."/>
            <person name="Ott T.L."/>
            <person name="Curto E.V."/>
            <person name="Krishna N.R."/>
            <person name="Pontzer C.H."/>
        </authorList>
    </citation>
    <scope>CIRCULAR DICHROISM ANALYSIS</scope>
    <scope>3D-STRUCTURE MODELING</scope>
</reference>
<reference key="4">
    <citation type="journal article" date="1995" name="J. Interferon Cytokine Res.">
        <title>A three-dimensional model of interferon-tau.</title>
        <authorList>
            <person name="Senda T."/>
            <person name="Saitoh S."/>
            <person name="Mitsui Y."/>
            <person name="Li J."/>
            <person name="Roberts R.M."/>
        </authorList>
    </citation>
    <scope>3D-STRUCTURE MODELING</scope>
</reference>
<reference key="5">
    <citation type="journal article" date="1998" name="Biochimie">
        <title>IFN-tau: a novel subtype I IFN1. Structural characteristics, non-ubiquitous expression, structure-function relationships, a pregnancy hormonal embryonic signal and cross-species therapeutic potentialities.</title>
        <authorList>
            <person name="Martal J.L."/>
            <person name="Chene N.M."/>
            <person name="Huynh L.P."/>
            <person name="L'Haridon R.M."/>
            <person name="Reinaud P.B."/>
            <person name="Guillomot M.W."/>
            <person name="Charlier M.A."/>
            <person name="Charpigny S.Y."/>
        </authorList>
    </citation>
    <scope>REVIEW</scope>
</reference>
<reference key="6">
    <citation type="journal article" date="1999" name="J. Mol. Biol.">
        <title>Crystal structure of ovine interferon-tau at 2.1 A resolution.</title>
        <authorList>
            <person name="Radhakrishnan R."/>
            <person name="Walter L.J."/>
            <person name="Subramaniam P.S."/>
            <person name="Johnson H.M."/>
            <person name="Walter M.R."/>
        </authorList>
    </citation>
    <scope>X-RAY CRYSTALLOGRAPHY (2.1 ANGSTROMS) OF 24-195</scope>
    <scope>DISULFIDE BONDS</scope>
</reference>
<comment type="function">
    <text evidence="2">Paracrine hormone primarily responsible for maternal recognition of pregnancy. Interacts with endometrial receptors, probably type I interferon receptors, and blocks estrogen receptor expression, preventing the estrogen-induced increase in oxytocin receptor expression in the endometrium. This results in the suppression of the pulsatile endometrial release of the luteolytic hormone prostaglandin F2-alpha, hindering the regression of the corpus luteum (luteolysis) and therefore a return to ovarian cyclicity. This, and a possible direct effect of IFN-tau on prostaglandin synthesis, leads in turn to continued ovarian progesterone secretion, which stimulates the secretion by the endometrium of the nutrients required for the growth of the conceptus. In summary, displays particularly high antiviral and antiproliferative potency concurrently with particular weak cytotoxicity, high antiluteolytic activity and immunomodulatory properties. In contrast with other IFNs, IFN-tau is not virally inducible.</text>
</comment>
<comment type="subcellular location">
    <subcellularLocation>
        <location>Secreted</location>
    </subcellularLocation>
    <text>Secreted into the uterine lumen.</text>
</comment>
<comment type="tissue specificity">
    <text>Constitutively and exclusively expressed in the mononuclear cells of the extraembryonic trophectoderm.</text>
</comment>
<comment type="developmental stage">
    <text>Major secretory product synthesized by the sheep conceptus between days 13 and 21 of pregnancy.</text>
</comment>
<comment type="miscellaneous">
    <text>IFN-tau genes are intronless. They evolved from IFN-omega genes in the ruminantia suborder and have continued to duplicate independently in different lineages of the ruminantia. They code for proteins very similar in sequence but with different biological potency and pattern of expression.</text>
</comment>
<comment type="similarity">
    <text evidence="4">Belongs to the alpha/beta interferon family. IFN-alphaII subfamily.</text>
</comment>
<accession>P56828</accession>
<accession>P08316</accession>
<keyword id="KW-0002">3D-structure</keyword>
<keyword id="KW-0051">Antiviral defense</keyword>
<keyword id="KW-0202">Cytokine</keyword>
<keyword id="KW-1015">Disulfide bond</keyword>
<keyword id="KW-0372">Hormone</keyword>
<keyword id="KW-0635">Pregnancy</keyword>
<keyword id="KW-1185">Reference proteome</keyword>
<keyword id="KW-0964">Secreted</keyword>
<keyword id="KW-0732">Signal</keyword>
<organism>
    <name type="scientific">Ovis aries</name>
    <name type="common">Sheep</name>
    <dbReference type="NCBI Taxonomy" id="9940"/>
    <lineage>
        <taxon>Eukaryota</taxon>
        <taxon>Metazoa</taxon>
        <taxon>Chordata</taxon>
        <taxon>Craniata</taxon>
        <taxon>Vertebrata</taxon>
        <taxon>Euteleostomi</taxon>
        <taxon>Mammalia</taxon>
        <taxon>Eutheria</taxon>
        <taxon>Laurasiatheria</taxon>
        <taxon>Artiodactyla</taxon>
        <taxon>Ruminantia</taxon>
        <taxon>Pecora</taxon>
        <taxon>Bovidae</taxon>
        <taxon>Caprinae</taxon>
        <taxon>Ovis</taxon>
    </lineage>
</organism>
<dbReference type="EMBL" id="Y00287">
    <property type="protein sequence ID" value="CAA68396.1"/>
    <property type="molecule type" value="mRNA"/>
</dbReference>
<dbReference type="RefSeq" id="NP_001116871.1">
    <property type="nucleotide sequence ID" value="NM_001123399.1"/>
</dbReference>
<dbReference type="PDB" id="1B5L">
    <property type="method" value="X-ray"/>
    <property type="resolution" value="2.10 A"/>
    <property type="chains" value="A=24-195"/>
</dbReference>
<dbReference type="PDBsum" id="1B5L"/>
<dbReference type="SMR" id="P56828"/>
<dbReference type="GeneID" id="100144750"/>
<dbReference type="KEGG" id="oas:100144750"/>
<dbReference type="CTD" id="100144750"/>
<dbReference type="OrthoDB" id="9833506at2759"/>
<dbReference type="EvolutionaryTrace" id="P56828"/>
<dbReference type="Proteomes" id="UP000002356">
    <property type="component" value="Unplaced"/>
</dbReference>
<dbReference type="GO" id="GO:0005615">
    <property type="term" value="C:extracellular space"/>
    <property type="evidence" value="ECO:0007669"/>
    <property type="project" value="UniProtKB-KW"/>
</dbReference>
<dbReference type="GO" id="GO:0005125">
    <property type="term" value="F:cytokine activity"/>
    <property type="evidence" value="ECO:0007669"/>
    <property type="project" value="UniProtKB-KW"/>
</dbReference>
<dbReference type="GO" id="GO:0005126">
    <property type="term" value="F:cytokine receptor binding"/>
    <property type="evidence" value="ECO:0007669"/>
    <property type="project" value="InterPro"/>
</dbReference>
<dbReference type="GO" id="GO:0005179">
    <property type="term" value="F:hormone activity"/>
    <property type="evidence" value="ECO:0007669"/>
    <property type="project" value="UniProtKB-KW"/>
</dbReference>
<dbReference type="GO" id="GO:0051607">
    <property type="term" value="P:defense response to virus"/>
    <property type="evidence" value="ECO:0007669"/>
    <property type="project" value="UniProtKB-KW"/>
</dbReference>
<dbReference type="GO" id="GO:0007565">
    <property type="term" value="P:female pregnancy"/>
    <property type="evidence" value="ECO:0007669"/>
    <property type="project" value="UniProtKB-KW"/>
</dbReference>
<dbReference type="CDD" id="cd00095">
    <property type="entry name" value="IFab"/>
    <property type="match status" value="1"/>
</dbReference>
<dbReference type="FunFam" id="1.20.1250.10:FF:000001">
    <property type="entry name" value="Interferon alpha"/>
    <property type="match status" value="1"/>
</dbReference>
<dbReference type="Gene3D" id="1.20.1250.10">
    <property type="match status" value="1"/>
</dbReference>
<dbReference type="InterPro" id="IPR009079">
    <property type="entry name" value="4_helix_cytokine-like_core"/>
</dbReference>
<dbReference type="InterPro" id="IPR000471">
    <property type="entry name" value="Interferon_alpha/beta/delta"/>
</dbReference>
<dbReference type="PANTHER" id="PTHR11691:SF37">
    <property type="entry name" value="INTERFERON OMEGA-1"/>
    <property type="match status" value="1"/>
</dbReference>
<dbReference type="PANTHER" id="PTHR11691">
    <property type="entry name" value="TYPE I INTERFERON"/>
    <property type="match status" value="1"/>
</dbReference>
<dbReference type="Pfam" id="PF00143">
    <property type="entry name" value="Interferon"/>
    <property type="match status" value="1"/>
</dbReference>
<dbReference type="PRINTS" id="PR00266">
    <property type="entry name" value="INTERFERONAB"/>
</dbReference>
<dbReference type="SMART" id="SM00076">
    <property type="entry name" value="IFabd"/>
    <property type="match status" value="1"/>
</dbReference>
<dbReference type="SUPFAM" id="SSF47266">
    <property type="entry name" value="4-helical cytokines"/>
    <property type="match status" value="1"/>
</dbReference>
<dbReference type="PROSITE" id="PS00252">
    <property type="entry name" value="INTERFERON_A_B_D"/>
    <property type="match status" value="1"/>
</dbReference>
<proteinExistence type="evidence at protein level"/>
<gene>
    <name type="primary">IFNT1</name>
    <name type="synonym">OTP</name>
</gene>
<evidence type="ECO:0000250" key="1"/>
<evidence type="ECO:0000269" key="2">
    <source>
    </source>
</evidence>
<evidence type="ECO:0000269" key="3">
    <source>
    </source>
</evidence>
<evidence type="ECO:0000305" key="4"/>
<evidence type="ECO:0007829" key="5">
    <source>
        <dbReference type="PDB" id="1B5L"/>
    </source>
</evidence>
<sequence length="195" mass="22193">MAFVLSLLMALVLVSYGPGGSLGCYLSRKLMLDARENLKLLDRMNRLSPHSCLQDRKDFGLPQEMVEGDQLQKDQAFPVLYEMLQQSFNLFYTEHSSAAWDTTLLEQLCTGLQQQLDHLDTCRGQVMGEEDSELGNMDPIVTVKKYFQGIYDYLQEKGYSDCAWEIVRVEMMRALTVSTTLQKRLTKMGGDLNSP</sequence>
<protein>
    <recommendedName>
        <fullName>Interferon tau-1</fullName>
        <shortName>IFN-tau-1</shortName>
    </recommendedName>
    <alternativeName>
        <fullName>Antiluteolysin</fullName>
    </alternativeName>
    <alternativeName>
        <fullName>Trophoblast antiluteolytic protein</fullName>
    </alternativeName>
    <alternativeName>
        <fullName>Trophoblast protein 1</fullName>
        <shortName>TP-1</shortName>
    </alternativeName>
    <alternativeName>
        <fullName>Trophoblastin</fullName>
    </alternativeName>
</protein>